<name>CWP36_TOBAC</name>
<keyword id="KW-0134">Cell wall</keyword>
<keyword id="KW-0903">Direct protein sequencing</keyword>
<keyword id="KW-1185">Reference proteome</keyword>
<keyword id="KW-0964">Secreted</keyword>
<proteinExistence type="evidence at protein level"/>
<dbReference type="PaxDb" id="4097-P82444"/>
<dbReference type="Proteomes" id="UP000084051">
    <property type="component" value="Unplaced"/>
</dbReference>
<dbReference type="GO" id="GO:0005576">
    <property type="term" value="C:extracellular region"/>
    <property type="evidence" value="ECO:0007669"/>
    <property type="project" value="UniProtKB-KW"/>
</dbReference>
<organism>
    <name type="scientific">Nicotiana tabacum</name>
    <name type="common">Common tobacco</name>
    <dbReference type="NCBI Taxonomy" id="4097"/>
    <lineage>
        <taxon>Eukaryota</taxon>
        <taxon>Viridiplantae</taxon>
        <taxon>Streptophyta</taxon>
        <taxon>Embryophyta</taxon>
        <taxon>Tracheophyta</taxon>
        <taxon>Spermatophyta</taxon>
        <taxon>Magnoliopsida</taxon>
        <taxon>eudicotyledons</taxon>
        <taxon>Gunneridae</taxon>
        <taxon>Pentapetalae</taxon>
        <taxon>asterids</taxon>
        <taxon>lamiids</taxon>
        <taxon>Solanales</taxon>
        <taxon>Solanaceae</taxon>
        <taxon>Nicotianoideae</taxon>
        <taxon>Nicotianeae</taxon>
        <taxon>Nicotiana</taxon>
    </lineage>
</organism>
<protein>
    <recommendedName>
        <fullName>36 kDa cell wall protein</fullName>
    </recommendedName>
</protein>
<reference evidence="3" key="1">
    <citation type="journal article" date="2001" name="Planta">
        <title>Proteomic analysis reveals a novel set of cell wall proteins in a transformed tobacco cell culture that synthesises secondary walls as determined by biochemical and morphological parameters.</title>
        <authorList>
            <person name="Blee K.A."/>
            <person name="Wheatley E.R."/>
            <person name="Bonham V.A."/>
            <person name="Mitchell G.P."/>
            <person name="Robertson D."/>
            <person name="Slabas A.R."/>
            <person name="Burrell M.M."/>
            <person name="Wojtaszek P."/>
            <person name="Bolwell G.P."/>
        </authorList>
    </citation>
    <scope>PROTEIN SEQUENCE</scope>
    <scope>SUBCELLULAR LOCATION</scope>
    <source>
        <strain evidence="1">cv. Petit Havana</strain>
    </source>
</reference>
<feature type="chain" id="PRO_0000079726" description="36 kDa cell wall protein">
    <location>
        <begin position="1"/>
        <end position="16" status="greater than"/>
    </location>
</feature>
<feature type="non-terminal residue" evidence="2">
    <location>
        <position position="16"/>
    </location>
</feature>
<accession>P82444</accession>
<comment type="subcellular location">
    <subcellularLocation>
        <location evidence="1">Secreted</location>
        <location evidence="1">Cell wall</location>
    </subcellularLocation>
</comment>
<sequence length="16" mass="1785">VNDGYLDNGLQEGDFE</sequence>
<evidence type="ECO:0000269" key="1">
    <source>
    </source>
</evidence>
<evidence type="ECO:0000303" key="2">
    <source>
    </source>
</evidence>
<evidence type="ECO:0000305" key="3"/>